<name>Y1313_RHIME</name>
<organism>
    <name type="scientific">Rhizobium meliloti (strain 1021)</name>
    <name type="common">Ensifer meliloti</name>
    <name type="synonym">Sinorhizobium meliloti</name>
    <dbReference type="NCBI Taxonomy" id="266834"/>
    <lineage>
        <taxon>Bacteria</taxon>
        <taxon>Pseudomonadati</taxon>
        <taxon>Pseudomonadota</taxon>
        <taxon>Alphaproteobacteria</taxon>
        <taxon>Hyphomicrobiales</taxon>
        <taxon>Rhizobiaceae</taxon>
        <taxon>Sinorhizobium/Ensifer group</taxon>
        <taxon>Sinorhizobium</taxon>
    </lineage>
</organism>
<dbReference type="EMBL" id="AL591688">
    <property type="protein sequence ID" value="CAC45892.1"/>
    <property type="molecule type" value="Genomic_DNA"/>
</dbReference>
<dbReference type="RefSeq" id="NP_385419.1">
    <property type="nucleotide sequence ID" value="NC_003047.1"/>
</dbReference>
<dbReference type="RefSeq" id="WP_003533053.1">
    <property type="nucleotide sequence ID" value="NC_003047.1"/>
</dbReference>
<dbReference type="SMR" id="Q92QK6"/>
<dbReference type="EnsemblBacteria" id="CAC45892">
    <property type="protein sequence ID" value="CAC45892"/>
    <property type="gene ID" value="SMc01351"/>
</dbReference>
<dbReference type="KEGG" id="sme:SMc01351"/>
<dbReference type="PATRIC" id="fig|266834.11.peg.2727"/>
<dbReference type="eggNOG" id="COG3811">
    <property type="taxonomic scope" value="Bacteria"/>
</dbReference>
<dbReference type="HOGENOM" id="CLU_164736_0_0_5"/>
<dbReference type="OrthoDB" id="7204880at2"/>
<dbReference type="Proteomes" id="UP000001976">
    <property type="component" value="Chromosome"/>
</dbReference>
<dbReference type="HAMAP" id="MF_00827">
    <property type="entry name" value="UPF0386"/>
    <property type="match status" value="1"/>
</dbReference>
<dbReference type="InterPro" id="IPR018654">
    <property type="entry name" value="YjhX_toxin"/>
</dbReference>
<dbReference type="NCBIfam" id="NF010240">
    <property type="entry name" value="PRK13687.1"/>
    <property type="match status" value="1"/>
</dbReference>
<dbReference type="Pfam" id="PF09857">
    <property type="entry name" value="YjhX_toxin"/>
    <property type="match status" value="1"/>
</dbReference>
<gene>
    <name type="ordered locus">R01313</name>
    <name type="ORF">SMc01351</name>
</gene>
<keyword id="KW-1185">Reference proteome</keyword>
<reference key="1">
    <citation type="journal article" date="2001" name="Proc. Natl. Acad. Sci. U.S.A.">
        <title>Analysis of the chromosome sequence of the legume symbiont Sinorhizobium meliloti strain 1021.</title>
        <authorList>
            <person name="Capela D."/>
            <person name="Barloy-Hubler F."/>
            <person name="Gouzy J."/>
            <person name="Bothe G."/>
            <person name="Ampe F."/>
            <person name="Batut J."/>
            <person name="Boistard P."/>
            <person name="Becker A."/>
            <person name="Boutry M."/>
            <person name="Cadieu E."/>
            <person name="Dreano S."/>
            <person name="Gloux S."/>
            <person name="Godrie T."/>
            <person name="Goffeau A."/>
            <person name="Kahn D."/>
            <person name="Kiss E."/>
            <person name="Lelaure V."/>
            <person name="Masuy D."/>
            <person name="Pohl T."/>
            <person name="Portetelle D."/>
            <person name="Puehler A."/>
            <person name="Purnelle B."/>
            <person name="Ramsperger U."/>
            <person name="Renard C."/>
            <person name="Thebault P."/>
            <person name="Vandenbol M."/>
            <person name="Weidner S."/>
            <person name="Galibert F."/>
        </authorList>
    </citation>
    <scope>NUCLEOTIDE SEQUENCE [LARGE SCALE GENOMIC DNA]</scope>
    <source>
        <strain>1021</strain>
    </source>
</reference>
<reference key="2">
    <citation type="journal article" date="2001" name="Science">
        <title>The composite genome of the legume symbiont Sinorhizobium meliloti.</title>
        <authorList>
            <person name="Galibert F."/>
            <person name="Finan T.M."/>
            <person name="Long S.R."/>
            <person name="Puehler A."/>
            <person name="Abola P."/>
            <person name="Ampe F."/>
            <person name="Barloy-Hubler F."/>
            <person name="Barnett M.J."/>
            <person name="Becker A."/>
            <person name="Boistard P."/>
            <person name="Bothe G."/>
            <person name="Boutry M."/>
            <person name="Bowser L."/>
            <person name="Buhrmester J."/>
            <person name="Cadieu E."/>
            <person name="Capela D."/>
            <person name="Chain P."/>
            <person name="Cowie A."/>
            <person name="Davis R.W."/>
            <person name="Dreano S."/>
            <person name="Federspiel N.A."/>
            <person name="Fisher R.F."/>
            <person name="Gloux S."/>
            <person name="Godrie T."/>
            <person name="Goffeau A."/>
            <person name="Golding B."/>
            <person name="Gouzy J."/>
            <person name="Gurjal M."/>
            <person name="Hernandez-Lucas I."/>
            <person name="Hong A."/>
            <person name="Huizar L."/>
            <person name="Hyman R.W."/>
            <person name="Jones T."/>
            <person name="Kahn D."/>
            <person name="Kahn M.L."/>
            <person name="Kalman S."/>
            <person name="Keating D.H."/>
            <person name="Kiss E."/>
            <person name="Komp C."/>
            <person name="Lelaure V."/>
            <person name="Masuy D."/>
            <person name="Palm C."/>
            <person name="Peck M.C."/>
            <person name="Pohl T.M."/>
            <person name="Portetelle D."/>
            <person name="Purnelle B."/>
            <person name="Ramsperger U."/>
            <person name="Surzycki R."/>
            <person name="Thebault P."/>
            <person name="Vandenbol M."/>
            <person name="Vorhoelter F.J."/>
            <person name="Weidner S."/>
            <person name="Wells D.H."/>
            <person name="Wong K."/>
            <person name="Yeh K.-C."/>
            <person name="Batut J."/>
        </authorList>
    </citation>
    <scope>NUCLEOTIDE SEQUENCE [LARGE SCALE GENOMIC DNA]</scope>
    <source>
        <strain>1021</strain>
    </source>
</reference>
<protein>
    <recommendedName>
        <fullName evidence="1">UPF0386 protein R01313</fullName>
    </recommendedName>
</protein>
<proteinExistence type="inferred from homology"/>
<comment type="similarity">
    <text evidence="1">Belongs to the UPF0386 family.</text>
</comment>
<sequence length="84" mass="9783">MDISRAEQRILHHLAQGGRIEITREGKAIAEIRCFTRDGWVYPGVDLELFRKLKRKRAIKSSAGKPYRITERGLHLVRSELNNR</sequence>
<accession>Q92QK6</accession>
<feature type="chain" id="PRO_0000252185" description="UPF0386 protein R01313">
    <location>
        <begin position="1"/>
        <end position="84"/>
    </location>
</feature>
<evidence type="ECO:0000255" key="1">
    <source>
        <dbReference type="HAMAP-Rule" id="MF_00827"/>
    </source>
</evidence>